<evidence type="ECO:0000255" key="1">
    <source>
        <dbReference type="HAMAP-Rule" id="MF_00022"/>
    </source>
</evidence>
<comment type="function">
    <text evidence="1">Catalyzes the attachment of glutamate to tRNA(Glu) in a two-step reaction: glutamate is first activated by ATP to form Glu-AMP and then transferred to the acceptor end of tRNA(Glu).</text>
</comment>
<comment type="catalytic activity">
    <reaction evidence="1">
        <text>tRNA(Glu) + L-glutamate + ATP = L-glutamyl-tRNA(Glu) + AMP + diphosphate</text>
        <dbReference type="Rhea" id="RHEA:23540"/>
        <dbReference type="Rhea" id="RHEA-COMP:9663"/>
        <dbReference type="Rhea" id="RHEA-COMP:9680"/>
        <dbReference type="ChEBI" id="CHEBI:29985"/>
        <dbReference type="ChEBI" id="CHEBI:30616"/>
        <dbReference type="ChEBI" id="CHEBI:33019"/>
        <dbReference type="ChEBI" id="CHEBI:78442"/>
        <dbReference type="ChEBI" id="CHEBI:78520"/>
        <dbReference type="ChEBI" id="CHEBI:456215"/>
        <dbReference type="EC" id="6.1.1.17"/>
    </reaction>
</comment>
<comment type="subunit">
    <text evidence="1">Monomer.</text>
</comment>
<comment type="subcellular location">
    <subcellularLocation>
        <location evidence="1">Cytoplasm</location>
    </subcellularLocation>
</comment>
<comment type="similarity">
    <text evidence="1">Belongs to the class-I aminoacyl-tRNA synthetase family. Glutamate--tRNA ligase type 1 subfamily.</text>
</comment>
<feature type="chain" id="PRO_0000237408" description="Glutamate--tRNA ligase">
    <location>
        <begin position="1"/>
        <end position="481"/>
    </location>
</feature>
<feature type="short sequence motif" description="'HIGH' region" evidence="1">
    <location>
        <begin position="11"/>
        <end position="21"/>
    </location>
</feature>
<feature type="short sequence motif" description="'KMSKS' region" evidence="1">
    <location>
        <begin position="255"/>
        <end position="259"/>
    </location>
</feature>
<feature type="binding site" evidence="1">
    <location>
        <position position="258"/>
    </location>
    <ligand>
        <name>ATP</name>
        <dbReference type="ChEBI" id="CHEBI:30616"/>
    </ligand>
</feature>
<protein>
    <recommendedName>
        <fullName evidence="1">Glutamate--tRNA ligase</fullName>
        <ecNumber evidence="1">6.1.1.17</ecNumber>
    </recommendedName>
    <alternativeName>
        <fullName evidence="1">Glutamyl-tRNA synthetase</fullName>
        <shortName evidence="1">GluRS</shortName>
    </alternativeName>
</protein>
<proteinExistence type="inferred from homology"/>
<reference key="1">
    <citation type="journal article" date="2005" name="J. Infect. Dis.">
        <title>Genome sequence of a serotype M28 strain of group A Streptococcus: potential new insights into puerperal sepsis and bacterial disease specificity.</title>
        <authorList>
            <person name="Green N.M."/>
            <person name="Zhang S."/>
            <person name="Porcella S.F."/>
            <person name="Nagiec M.J."/>
            <person name="Barbian K.D."/>
            <person name="Beres S.B."/>
            <person name="Lefebvre R.B."/>
            <person name="Musser J.M."/>
        </authorList>
    </citation>
    <scope>NUCLEOTIDE SEQUENCE [LARGE SCALE GENOMIC DNA]</scope>
    <source>
        <strain>MGAS6180</strain>
    </source>
</reference>
<gene>
    <name evidence="1" type="primary">gltX</name>
    <name type="ordered locus">M28_Spy0197</name>
</gene>
<accession>Q48VE5</accession>
<dbReference type="EC" id="6.1.1.17" evidence="1"/>
<dbReference type="EMBL" id="CP000056">
    <property type="protein sequence ID" value="AAX71311.1"/>
    <property type="molecule type" value="Genomic_DNA"/>
</dbReference>
<dbReference type="RefSeq" id="WP_002986105.1">
    <property type="nucleotide sequence ID" value="NC_007296.2"/>
</dbReference>
<dbReference type="SMR" id="Q48VE5"/>
<dbReference type="KEGG" id="spb:M28_Spy0197"/>
<dbReference type="HOGENOM" id="CLU_015768_6_1_9"/>
<dbReference type="GO" id="GO:0005829">
    <property type="term" value="C:cytosol"/>
    <property type="evidence" value="ECO:0007669"/>
    <property type="project" value="TreeGrafter"/>
</dbReference>
<dbReference type="GO" id="GO:0005524">
    <property type="term" value="F:ATP binding"/>
    <property type="evidence" value="ECO:0007669"/>
    <property type="project" value="UniProtKB-UniRule"/>
</dbReference>
<dbReference type="GO" id="GO:0004818">
    <property type="term" value="F:glutamate-tRNA ligase activity"/>
    <property type="evidence" value="ECO:0007669"/>
    <property type="project" value="UniProtKB-UniRule"/>
</dbReference>
<dbReference type="GO" id="GO:0000049">
    <property type="term" value="F:tRNA binding"/>
    <property type="evidence" value="ECO:0007669"/>
    <property type="project" value="InterPro"/>
</dbReference>
<dbReference type="GO" id="GO:0008270">
    <property type="term" value="F:zinc ion binding"/>
    <property type="evidence" value="ECO:0007669"/>
    <property type="project" value="InterPro"/>
</dbReference>
<dbReference type="GO" id="GO:0006424">
    <property type="term" value="P:glutamyl-tRNA aminoacylation"/>
    <property type="evidence" value="ECO:0007669"/>
    <property type="project" value="UniProtKB-UniRule"/>
</dbReference>
<dbReference type="CDD" id="cd00808">
    <property type="entry name" value="GluRS_core"/>
    <property type="match status" value="1"/>
</dbReference>
<dbReference type="FunFam" id="1.10.10.350:FF:000002">
    <property type="entry name" value="Glutamate--tRNA ligase"/>
    <property type="match status" value="1"/>
</dbReference>
<dbReference type="FunFam" id="3.40.50.620:FF:000007">
    <property type="entry name" value="Glutamate--tRNA ligase"/>
    <property type="match status" value="1"/>
</dbReference>
<dbReference type="Gene3D" id="1.10.10.350">
    <property type="match status" value="1"/>
</dbReference>
<dbReference type="Gene3D" id="3.40.50.620">
    <property type="entry name" value="HUPs"/>
    <property type="match status" value="1"/>
</dbReference>
<dbReference type="HAMAP" id="MF_00022">
    <property type="entry name" value="Glu_tRNA_synth_type1"/>
    <property type="match status" value="1"/>
</dbReference>
<dbReference type="InterPro" id="IPR045462">
    <property type="entry name" value="aa-tRNA-synth_I_cd-bd"/>
</dbReference>
<dbReference type="InterPro" id="IPR020751">
    <property type="entry name" value="aa-tRNA-synth_I_codon-bd_sub2"/>
</dbReference>
<dbReference type="InterPro" id="IPR001412">
    <property type="entry name" value="aa-tRNA-synth_I_CS"/>
</dbReference>
<dbReference type="InterPro" id="IPR008925">
    <property type="entry name" value="aa_tRNA-synth_I_cd-bd_sf"/>
</dbReference>
<dbReference type="InterPro" id="IPR004527">
    <property type="entry name" value="Glu-tRNA-ligase_bac/mito"/>
</dbReference>
<dbReference type="InterPro" id="IPR000924">
    <property type="entry name" value="Glu/Gln-tRNA-synth"/>
</dbReference>
<dbReference type="InterPro" id="IPR020058">
    <property type="entry name" value="Glu/Gln-tRNA-synth_Ib_cat-dom"/>
</dbReference>
<dbReference type="InterPro" id="IPR049940">
    <property type="entry name" value="GluQ/Sye"/>
</dbReference>
<dbReference type="InterPro" id="IPR033910">
    <property type="entry name" value="GluRS_core"/>
</dbReference>
<dbReference type="InterPro" id="IPR014729">
    <property type="entry name" value="Rossmann-like_a/b/a_fold"/>
</dbReference>
<dbReference type="NCBIfam" id="TIGR00464">
    <property type="entry name" value="gltX_bact"/>
    <property type="match status" value="1"/>
</dbReference>
<dbReference type="PANTHER" id="PTHR43311">
    <property type="entry name" value="GLUTAMATE--TRNA LIGASE"/>
    <property type="match status" value="1"/>
</dbReference>
<dbReference type="PANTHER" id="PTHR43311:SF2">
    <property type="entry name" value="GLUTAMATE--TRNA LIGASE, MITOCHONDRIAL-RELATED"/>
    <property type="match status" value="1"/>
</dbReference>
<dbReference type="Pfam" id="PF19269">
    <property type="entry name" value="Anticodon_2"/>
    <property type="match status" value="1"/>
</dbReference>
<dbReference type="Pfam" id="PF00749">
    <property type="entry name" value="tRNA-synt_1c"/>
    <property type="match status" value="1"/>
</dbReference>
<dbReference type="PRINTS" id="PR00987">
    <property type="entry name" value="TRNASYNTHGLU"/>
</dbReference>
<dbReference type="SUPFAM" id="SSF48163">
    <property type="entry name" value="An anticodon-binding domain of class I aminoacyl-tRNA synthetases"/>
    <property type="match status" value="1"/>
</dbReference>
<dbReference type="SUPFAM" id="SSF52374">
    <property type="entry name" value="Nucleotidylyl transferase"/>
    <property type="match status" value="1"/>
</dbReference>
<dbReference type="PROSITE" id="PS00178">
    <property type="entry name" value="AA_TRNA_LIGASE_I"/>
    <property type="match status" value="1"/>
</dbReference>
<sequence length="481" mass="55093">MSKPIRVRYAPSPTGLLHIGNARTALFNYLYARRHGGTFIIRIEDTDRKRHVEDGERSQLENLKWLGMDWDESPETHENYRQSERLALYQQYIDQLLAEGKAYKSYVTEEELAAERERQEAAGETPRYINEFIGMSADEKAKYIAEREAAGIVPTVRLAVNESGIYKWTDMVKGDIEFEGGNIGGDWVIQKKDGYPTYNFAVVVDDHDMQISHVIRGDDHIANTPKQLMVYEALGWEAPEFGHMTLIINSETGKKLSKRDTNTLQFIEDYRKKGYMPEAVFNFIALLGWNPGGEEEIFSREQLIALFDENRLSKSPAAFDQKKMDWMSNEYLKHADFETVYALCKPFLEEAGRLTEKAEKLVELYKPQLKSADEIIPLTDLFFSDFPELTEAEKEVMAGETVSTVLQAFKAKLEAMSDEDFKPENIFPQIKAVQKETGIKGKNLFMPIRIAVSGEMHGPELPNTIYLLGRDKSIEHIKNML</sequence>
<keyword id="KW-0030">Aminoacyl-tRNA synthetase</keyword>
<keyword id="KW-0067">ATP-binding</keyword>
<keyword id="KW-0963">Cytoplasm</keyword>
<keyword id="KW-0436">Ligase</keyword>
<keyword id="KW-0547">Nucleotide-binding</keyword>
<keyword id="KW-0648">Protein biosynthesis</keyword>
<organism>
    <name type="scientific">Streptococcus pyogenes serotype M28 (strain MGAS6180)</name>
    <dbReference type="NCBI Taxonomy" id="319701"/>
    <lineage>
        <taxon>Bacteria</taxon>
        <taxon>Bacillati</taxon>
        <taxon>Bacillota</taxon>
        <taxon>Bacilli</taxon>
        <taxon>Lactobacillales</taxon>
        <taxon>Streptococcaceae</taxon>
        <taxon>Streptococcus</taxon>
    </lineage>
</organism>
<name>SYE_STRPM</name>